<organism>
    <name type="scientific">Bacillus cereus (strain AH187)</name>
    <dbReference type="NCBI Taxonomy" id="405534"/>
    <lineage>
        <taxon>Bacteria</taxon>
        <taxon>Bacillati</taxon>
        <taxon>Bacillota</taxon>
        <taxon>Bacilli</taxon>
        <taxon>Bacillales</taxon>
        <taxon>Bacillaceae</taxon>
        <taxon>Bacillus</taxon>
        <taxon>Bacillus cereus group</taxon>
    </lineage>
</organism>
<gene>
    <name evidence="1" type="primary">rplX</name>
    <name type="ordered locus">BCAH187_A0152</name>
</gene>
<reference key="1">
    <citation type="submission" date="2008-10" db="EMBL/GenBank/DDBJ databases">
        <title>Genome sequence of Bacillus cereus AH187.</title>
        <authorList>
            <person name="Dodson R.J."/>
            <person name="Durkin A.S."/>
            <person name="Rosovitz M.J."/>
            <person name="Rasko D.A."/>
            <person name="Kolsto A.B."/>
            <person name="Okstad O.A."/>
            <person name="Ravel J."/>
            <person name="Sutton G."/>
        </authorList>
    </citation>
    <scope>NUCLEOTIDE SEQUENCE [LARGE SCALE GENOMIC DNA]</scope>
    <source>
        <strain>AH187</strain>
    </source>
</reference>
<protein>
    <recommendedName>
        <fullName evidence="1">Large ribosomal subunit protein uL24</fullName>
    </recommendedName>
    <alternativeName>
        <fullName evidence="2">50S ribosomal protein L24</fullName>
    </alternativeName>
</protein>
<dbReference type="EMBL" id="CP001177">
    <property type="protein sequence ID" value="ACJ79201.1"/>
    <property type="molecule type" value="Genomic_DNA"/>
</dbReference>
<dbReference type="SMR" id="B7HQV5"/>
<dbReference type="KEGG" id="bcr:BCAH187_A0152"/>
<dbReference type="HOGENOM" id="CLU_093315_2_0_9"/>
<dbReference type="Proteomes" id="UP000002214">
    <property type="component" value="Chromosome"/>
</dbReference>
<dbReference type="GO" id="GO:1990904">
    <property type="term" value="C:ribonucleoprotein complex"/>
    <property type="evidence" value="ECO:0007669"/>
    <property type="project" value="UniProtKB-KW"/>
</dbReference>
<dbReference type="GO" id="GO:0005840">
    <property type="term" value="C:ribosome"/>
    <property type="evidence" value="ECO:0007669"/>
    <property type="project" value="UniProtKB-KW"/>
</dbReference>
<dbReference type="GO" id="GO:0019843">
    <property type="term" value="F:rRNA binding"/>
    <property type="evidence" value="ECO:0007669"/>
    <property type="project" value="UniProtKB-UniRule"/>
</dbReference>
<dbReference type="GO" id="GO:0003735">
    <property type="term" value="F:structural constituent of ribosome"/>
    <property type="evidence" value="ECO:0007669"/>
    <property type="project" value="InterPro"/>
</dbReference>
<dbReference type="GO" id="GO:0006412">
    <property type="term" value="P:translation"/>
    <property type="evidence" value="ECO:0007669"/>
    <property type="project" value="UniProtKB-UniRule"/>
</dbReference>
<dbReference type="CDD" id="cd06089">
    <property type="entry name" value="KOW_RPL26"/>
    <property type="match status" value="1"/>
</dbReference>
<dbReference type="FunFam" id="2.30.30.30:FF:000004">
    <property type="entry name" value="50S ribosomal protein L24"/>
    <property type="match status" value="1"/>
</dbReference>
<dbReference type="Gene3D" id="2.30.30.30">
    <property type="match status" value="1"/>
</dbReference>
<dbReference type="HAMAP" id="MF_01326_B">
    <property type="entry name" value="Ribosomal_uL24_B"/>
    <property type="match status" value="1"/>
</dbReference>
<dbReference type="InterPro" id="IPR005824">
    <property type="entry name" value="KOW"/>
</dbReference>
<dbReference type="InterPro" id="IPR014722">
    <property type="entry name" value="Rib_uL2_dom2"/>
</dbReference>
<dbReference type="InterPro" id="IPR003256">
    <property type="entry name" value="Ribosomal_uL24"/>
</dbReference>
<dbReference type="InterPro" id="IPR005825">
    <property type="entry name" value="Ribosomal_uL24_CS"/>
</dbReference>
<dbReference type="InterPro" id="IPR041988">
    <property type="entry name" value="Ribosomal_uL24_KOW"/>
</dbReference>
<dbReference type="InterPro" id="IPR008991">
    <property type="entry name" value="Translation_prot_SH3-like_sf"/>
</dbReference>
<dbReference type="NCBIfam" id="TIGR01079">
    <property type="entry name" value="rplX_bact"/>
    <property type="match status" value="1"/>
</dbReference>
<dbReference type="PANTHER" id="PTHR12903">
    <property type="entry name" value="MITOCHONDRIAL RIBOSOMAL PROTEIN L24"/>
    <property type="match status" value="1"/>
</dbReference>
<dbReference type="Pfam" id="PF00467">
    <property type="entry name" value="KOW"/>
    <property type="match status" value="1"/>
</dbReference>
<dbReference type="Pfam" id="PF17136">
    <property type="entry name" value="ribosomal_L24"/>
    <property type="match status" value="1"/>
</dbReference>
<dbReference type="SMART" id="SM00739">
    <property type="entry name" value="KOW"/>
    <property type="match status" value="1"/>
</dbReference>
<dbReference type="SUPFAM" id="SSF50104">
    <property type="entry name" value="Translation proteins SH3-like domain"/>
    <property type="match status" value="1"/>
</dbReference>
<dbReference type="PROSITE" id="PS01108">
    <property type="entry name" value="RIBOSOMAL_L24"/>
    <property type="match status" value="1"/>
</dbReference>
<keyword id="KW-0687">Ribonucleoprotein</keyword>
<keyword id="KW-0689">Ribosomal protein</keyword>
<keyword id="KW-0694">RNA-binding</keyword>
<keyword id="KW-0699">rRNA-binding</keyword>
<accession>B7HQV5</accession>
<comment type="function">
    <text evidence="1">One of two assembly initiator proteins, it binds directly to the 5'-end of the 23S rRNA, where it nucleates assembly of the 50S subunit.</text>
</comment>
<comment type="function">
    <text evidence="1">One of the proteins that surrounds the polypeptide exit tunnel on the outside of the subunit.</text>
</comment>
<comment type="subunit">
    <text evidence="1">Part of the 50S ribosomal subunit.</text>
</comment>
<comment type="similarity">
    <text evidence="1">Belongs to the universal ribosomal protein uL24 family.</text>
</comment>
<proteinExistence type="inferred from homology"/>
<sequence>MHVKKGDKVQVITGKDKGKQGVILVAFPKQNRVIVEGVNIVKKHSKPSQLNPQGGIITKEAPIHVSNVMILDPKTGEPTRVGFKVEDGKKVRIAKKSGELLDK</sequence>
<name>RL24_BACC7</name>
<feature type="chain" id="PRO_1000141963" description="Large ribosomal subunit protein uL24">
    <location>
        <begin position="1"/>
        <end position="103"/>
    </location>
</feature>
<evidence type="ECO:0000255" key="1">
    <source>
        <dbReference type="HAMAP-Rule" id="MF_01326"/>
    </source>
</evidence>
<evidence type="ECO:0000305" key="2"/>